<sequence>MATELIENKLKLLPEKPGCYLMKDINGTVIYVGKSKNLKNRVRSYFKSKQVGRRAELVREIRDYDIITVSTDKEAFLLEITLIKKYQPYYNVQLKQGTGYPYIEITREHDPQTRLTSVVHKDGGYYFGPYPNVYAAQATLKFIRKVYPLRRCHGYQGRPCLYYHMGQCLGACFKKVPQKEYDEQIKKIKSFLNGDITSVKQDLTTKMEKASENLEFERAAEIRDQLKYIEETVEKQKIISNDNTQRDIFNYYVDKSWISIQIFFLRQAKLLRRETRMFPLTDAADPEDAFTSFIVQFYGQKNRILPKEILIPSGFDDDTLAEVLNVAVRTPQRGQKKSLLDMAKDNAKLKLDDKFRLLELGNRKTKGAQKEIFDALGLPYGHVIESFDHSHIQGADPVSALVVFKDGEPDKTSYRKYKLKGEVEHQNGGDEVRNTREVVRRRYGRLLREHKKMPDLILMDGGQIQVDACEDVLRNELNLNIPVAGMVKDDKHRTNHLLFGDPINGIPLKLIPLDPKSEGFYLMTRIQDEVHRFAITFHRRRHAKNALSSRLDSIKGIGPKSRNKLLRNFGSLKKIKEASIEDLRAAGLTLPQAQTVKLML</sequence>
<dbReference type="EMBL" id="CP000033">
    <property type="protein sequence ID" value="AAV42798.1"/>
    <property type="molecule type" value="Genomic_DNA"/>
</dbReference>
<dbReference type="RefSeq" id="WP_003547051.1">
    <property type="nucleotide sequence ID" value="NC_006814.3"/>
</dbReference>
<dbReference type="RefSeq" id="YP_193829.1">
    <property type="nucleotide sequence ID" value="NC_006814.3"/>
</dbReference>
<dbReference type="SMR" id="Q5FKH6"/>
<dbReference type="STRING" id="272621.LBA0946"/>
<dbReference type="GeneID" id="93289939"/>
<dbReference type="KEGG" id="lac:LBA0946"/>
<dbReference type="PATRIC" id="fig|272621.13.peg.897"/>
<dbReference type="eggNOG" id="COG0322">
    <property type="taxonomic scope" value="Bacteria"/>
</dbReference>
<dbReference type="HOGENOM" id="CLU_014841_3_2_9"/>
<dbReference type="OrthoDB" id="9804933at2"/>
<dbReference type="BioCyc" id="LACI272621:G1G49-948-MONOMER"/>
<dbReference type="Proteomes" id="UP000006381">
    <property type="component" value="Chromosome"/>
</dbReference>
<dbReference type="GO" id="GO:0005737">
    <property type="term" value="C:cytoplasm"/>
    <property type="evidence" value="ECO:0007669"/>
    <property type="project" value="UniProtKB-SubCell"/>
</dbReference>
<dbReference type="GO" id="GO:0009380">
    <property type="term" value="C:excinuclease repair complex"/>
    <property type="evidence" value="ECO:0007669"/>
    <property type="project" value="InterPro"/>
</dbReference>
<dbReference type="GO" id="GO:0003677">
    <property type="term" value="F:DNA binding"/>
    <property type="evidence" value="ECO:0007669"/>
    <property type="project" value="UniProtKB-UniRule"/>
</dbReference>
<dbReference type="GO" id="GO:0009381">
    <property type="term" value="F:excinuclease ABC activity"/>
    <property type="evidence" value="ECO:0007669"/>
    <property type="project" value="UniProtKB-UniRule"/>
</dbReference>
<dbReference type="GO" id="GO:0006289">
    <property type="term" value="P:nucleotide-excision repair"/>
    <property type="evidence" value="ECO:0007669"/>
    <property type="project" value="UniProtKB-UniRule"/>
</dbReference>
<dbReference type="GO" id="GO:0009432">
    <property type="term" value="P:SOS response"/>
    <property type="evidence" value="ECO:0007669"/>
    <property type="project" value="UniProtKB-UniRule"/>
</dbReference>
<dbReference type="CDD" id="cd10434">
    <property type="entry name" value="GIY-YIG_UvrC_Cho"/>
    <property type="match status" value="1"/>
</dbReference>
<dbReference type="FunFam" id="3.40.1440.10:FF:000001">
    <property type="entry name" value="UvrABC system protein C"/>
    <property type="match status" value="1"/>
</dbReference>
<dbReference type="FunFam" id="4.10.860.10:FF:000002">
    <property type="entry name" value="UvrABC system protein C"/>
    <property type="match status" value="1"/>
</dbReference>
<dbReference type="Gene3D" id="1.10.150.20">
    <property type="entry name" value="5' to 3' exonuclease, C-terminal subdomain"/>
    <property type="match status" value="1"/>
</dbReference>
<dbReference type="Gene3D" id="3.40.1440.10">
    <property type="entry name" value="GIY-YIG endonuclease"/>
    <property type="match status" value="1"/>
</dbReference>
<dbReference type="Gene3D" id="4.10.860.10">
    <property type="entry name" value="UVR domain"/>
    <property type="match status" value="1"/>
</dbReference>
<dbReference type="Gene3D" id="3.30.420.340">
    <property type="entry name" value="UvrC, RNAse H endonuclease domain"/>
    <property type="match status" value="1"/>
</dbReference>
<dbReference type="HAMAP" id="MF_00203">
    <property type="entry name" value="UvrC"/>
    <property type="match status" value="1"/>
</dbReference>
<dbReference type="InterPro" id="IPR000305">
    <property type="entry name" value="GIY-YIG_endonuc"/>
</dbReference>
<dbReference type="InterPro" id="IPR035901">
    <property type="entry name" value="GIY-YIG_endonuc_sf"/>
</dbReference>
<dbReference type="InterPro" id="IPR047296">
    <property type="entry name" value="GIY-YIG_UvrC_Cho"/>
</dbReference>
<dbReference type="InterPro" id="IPR010994">
    <property type="entry name" value="RuvA_2-like"/>
</dbReference>
<dbReference type="InterPro" id="IPR001943">
    <property type="entry name" value="UVR_dom"/>
</dbReference>
<dbReference type="InterPro" id="IPR036876">
    <property type="entry name" value="UVR_dom_sf"/>
</dbReference>
<dbReference type="InterPro" id="IPR050066">
    <property type="entry name" value="UvrABC_protein_C"/>
</dbReference>
<dbReference type="InterPro" id="IPR004791">
    <property type="entry name" value="UvrC"/>
</dbReference>
<dbReference type="InterPro" id="IPR001162">
    <property type="entry name" value="UvrC_RNase_H_dom"/>
</dbReference>
<dbReference type="InterPro" id="IPR038476">
    <property type="entry name" value="UvrC_RNase_H_dom_sf"/>
</dbReference>
<dbReference type="NCBIfam" id="TIGR00194">
    <property type="entry name" value="uvrC"/>
    <property type="match status" value="1"/>
</dbReference>
<dbReference type="PANTHER" id="PTHR30562:SF1">
    <property type="entry name" value="UVRABC SYSTEM PROTEIN C"/>
    <property type="match status" value="1"/>
</dbReference>
<dbReference type="PANTHER" id="PTHR30562">
    <property type="entry name" value="UVRC/OXIDOREDUCTASE"/>
    <property type="match status" value="1"/>
</dbReference>
<dbReference type="Pfam" id="PF01541">
    <property type="entry name" value="GIY-YIG"/>
    <property type="match status" value="1"/>
</dbReference>
<dbReference type="Pfam" id="PF14520">
    <property type="entry name" value="HHH_5"/>
    <property type="match status" value="1"/>
</dbReference>
<dbReference type="Pfam" id="PF02151">
    <property type="entry name" value="UVR"/>
    <property type="match status" value="1"/>
</dbReference>
<dbReference type="Pfam" id="PF22920">
    <property type="entry name" value="UvrC_RNaseH"/>
    <property type="match status" value="1"/>
</dbReference>
<dbReference type="Pfam" id="PF08459">
    <property type="entry name" value="UvrC_RNaseH_dom"/>
    <property type="match status" value="1"/>
</dbReference>
<dbReference type="SMART" id="SM00465">
    <property type="entry name" value="GIYc"/>
    <property type="match status" value="1"/>
</dbReference>
<dbReference type="SUPFAM" id="SSF46600">
    <property type="entry name" value="C-terminal UvrC-binding domain of UvrB"/>
    <property type="match status" value="1"/>
</dbReference>
<dbReference type="SUPFAM" id="SSF82771">
    <property type="entry name" value="GIY-YIG endonuclease"/>
    <property type="match status" value="1"/>
</dbReference>
<dbReference type="SUPFAM" id="SSF47781">
    <property type="entry name" value="RuvA domain 2-like"/>
    <property type="match status" value="1"/>
</dbReference>
<dbReference type="PROSITE" id="PS50164">
    <property type="entry name" value="GIY_YIG"/>
    <property type="match status" value="1"/>
</dbReference>
<dbReference type="PROSITE" id="PS50151">
    <property type="entry name" value="UVR"/>
    <property type="match status" value="1"/>
</dbReference>
<dbReference type="PROSITE" id="PS50165">
    <property type="entry name" value="UVRC"/>
    <property type="match status" value="1"/>
</dbReference>
<reference key="1">
    <citation type="journal article" date="2005" name="Proc. Natl. Acad. Sci. U.S.A.">
        <title>Complete genome sequence of the probiotic lactic acid bacterium Lactobacillus acidophilus NCFM.</title>
        <authorList>
            <person name="Altermann E."/>
            <person name="Russell W.M."/>
            <person name="Azcarate-Peril M.A."/>
            <person name="Barrangou R."/>
            <person name="Buck B.L."/>
            <person name="McAuliffe O."/>
            <person name="Souther N."/>
            <person name="Dobson A."/>
            <person name="Duong T."/>
            <person name="Callanan M."/>
            <person name="Lick S."/>
            <person name="Hamrick A."/>
            <person name="Cano R."/>
            <person name="Klaenhammer T.R."/>
        </authorList>
    </citation>
    <scope>NUCLEOTIDE SEQUENCE [LARGE SCALE GENOMIC DNA]</scope>
    <source>
        <strain>ATCC 700396 / NCK56 / N2 / NCFM</strain>
    </source>
</reference>
<comment type="function">
    <text evidence="1">The UvrABC repair system catalyzes the recognition and processing of DNA lesions. UvrC both incises the 5' and 3' sides of the lesion. The N-terminal half is responsible for the 3' incision and the C-terminal half is responsible for the 5' incision.</text>
</comment>
<comment type="subunit">
    <text evidence="1">Interacts with UvrB in an incision complex.</text>
</comment>
<comment type="subcellular location">
    <subcellularLocation>
        <location evidence="1">Cytoplasm</location>
    </subcellularLocation>
</comment>
<comment type="similarity">
    <text evidence="1">Belongs to the UvrC family.</text>
</comment>
<proteinExistence type="inferred from homology"/>
<organism>
    <name type="scientific">Lactobacillus acidophilus (strain ATCC 700396 / NCK56 / N2 / NCFM)</name>
    <dbReference type="NCBI Taxonomy" id="272621"/>
    <lineage>
        <taxon>Bacteria</taxon>
        <taxon>Bacillati</taxon>
        <taxon>Bacillota</taxon>
        <taxon>Bacilli</taxon>
        <taxon>Lactobacillales</taxon>
        <taxon>Lactobacillaceae</taxon>
        <taxon>Lactobacillus</taxon>
    </lineage>
</organism>
<keyword id="KW-0963">Cytoplasm</keyword>
<keyword id="KW-0227">DNA damage</keyword>
<keyword id="KW-0228">DNA excision</keyword>
<keyword id="KW-0234">DNA repair</keyword>
<keyword id="KW-0267">Excision nuclease</keyword>
<keyword id="KW-1185">Reference proteome</keyword>
<keyword id="KW-0742">SOS response</keyword>
<protein>
    <recommendedName>
        <fullName evidence="1">UvrABC system protein C</fullName>
        <shortName evidence="1">Protein UvrC</shortName>
    </recommendedName>
    <alternativeName>
        <fullName evidence="1">Excinuclease ABC subunit C</fullName>
    </alternativeName>
</protein>
<evidence type="ECO:0000255" key="1">
    <source>
        <dbReference type="HAMAP-Rule" id="MF_00203"/>
    </source>
</evidence>
<gene>
    <name evidence="1" type="primary">uvrC</name>
    <name type="ordered locus">LBA0946</name>
</gene>
<name>UVRC_LACAC</name>
<accession>Q5FKH6</accession>
<feature type="chain" id="PRO_0000227438" description="UvrABC system protein C">
    <location>
        <begin position="1"/>
        <end position="600"/>
    </location>
</feature>
<feature type="domain" description="GIY-YIG" evidence="1">
    <location>
        <begin position="15"/>
        <end position="92"/>
    </location>
</feature>
<feature type="domain" description="UVR" evidence="1">
    <location>
        <begin position="197"/>
        <end position="232"/>
    </location>
</feature>